<evidence type="ECO:0000255" key="1">
    <source>
        <dbReference type="HAMAP-Rule" id="MF_00600"/>
    </source>
</evidence>
<reference key="1">
    <citation type="journal article" date="2008" name="PLoS ONE">
        <title>Survival in nuclear waste, extreme resistance, and potential applications gleaned from the genome sequence of Kineococcus radiotolerans SRS30216.</title>
        <authorList>
            <person name="Bagwell C.E."/>
            <person name="Bhat S."/>
            <person name="Hawkins G.M."/>
            <person name="Smith B.W."/>
            <person name="Biswas T."/>
            <person name="Hoover T.R."/>
            <person name="Saunders E."/>
            <person name="Han C.S."/>
            <person name="Tsodikov O.V."/>
            <person name="Shimkets L.J."/>
        </authorList>
    </citation>
    <scope>NUCLEOTIDE SEQUENCE [LARGE SCALE GENOMIC DNA]</scope>
    <source>
        <strain>ATCC BAA-149 / DSM 14245 / SRS30216</strain>
    </source>
</reference>
<comment type="function">
    <text evidence="1">Together with its co-chaperonin GroES, plays an essential role in assisting protein folding. The GroEL-GroES system forms a nano-cage that allows encapsulation of the non-native substrate proteins and provides a physical environment optimized to promote and accelerate protein folding.</text>
</comment>
<comment type="catalytic activity">
    <reaction evidence="1">
        <text>ATP + H2O + a folded polypeptide = ADP + phosphate + an unfolded polypeptide.</text>
        <dbReference type="EC" id="5.6.1.7"/>
    </reaction>
</comment>
<comment type="subunit">
    <text evidence="1">Forms a cylinder of 14 subunits composed of two heptameric rings stacked back-to-back. Interacts with the co-chaperonin GroES.</text>
</comment>
<comment type="subcellular location">
    <subcellularLocation>
        <location evidence="1">Cytoplasm</location>
    </subcellularLocation>
</comment>
<comment type="similarity">
    <text evidence="1">Belongs to the chaperonin (HSP60) family.</text>
</comment>
<protein>
    <recommendedName>
        <fullName evidence="1">Chaperonin GroEL 1</fullName>
        <ecNumber evidence="1">5.6.1.7</ecNumber>
    </recommendedName>
    <alternativeName>
        <fullName evidence="1">60 kDa chaperonin 1</fullName>
    </alternativeName>
    <alternativeName>
        <fullName evidence="1">Chaperonin-60 1</fullName>
        <shortName evidence="1">Cpn60 1</shortName>
    </alternativeName>
</protein>
<keyword id="KW-0067">ATP-binding</keyword>
<keyword id="KW-0143">Chaperone</keyword>
<keyword id="KW-0963">Cytoplasm</keyword>
<keyword id="KW-0413">Isomerase</keyword>
<keyword id="KW-0547">Nucleotide-binding</keyword>
<keyword id="KW-1185">Reference proteome</keyword>
<name>CH601_KINRD</name>
<gene>
    <name evidence="1" type="primary">groEL1</name>
    <name evidence="1" type="synonym">groL1</name>
    <name type="ordered locus">Krad_0736</name>
</gene>
<feature type="chain" id="PRO_0000332009" description="Chaperonin GroEL 1">
    <location>
        <begin position="1"/>
        <end position="542"/>
    </location>
</feature>
<feature type="binding site" evidence="1">
    <location>
        <begin position="29"/>
        <end position="32"/>
    </location>
    <ligand>
        <name>ATP</name>
        <dbReference type="ChEBI" id="CHEBI:30616"/>
    </ligand>
</feature>
<feature type="binding site" evidence="1">
    <location>
        <begin position="86"/>
        <end position="90"/>
    </location>
    <ligand>
        <name>ATP</name>
        <dbReference type="ChEBI" id="CHEBI:30616"/>
    </ligand>
</feature>
<feature type="binding site" evidence="1">
    <location>
        <position position="413"/>
    </location>
    <ligand>
        <name>ATP</name>
        <dbReference type="ChEBI" id="CHEBI:30616"/>
    </ligand>
</feature>
<feature type="binding site" evidence="1">
    <location>
        <begin position="477"/>
        <end position="479"/>
    </location>
    <ligand>
        <name>ATP</name>
        <dbReference type="ChEBI" id="CHEBI:30616"/>
    </ligand>
</feature>
<feature type="binding site" evidence="1">
    <location>
        <position position="493"/>
    </location>
    <ligand>
        <name>ATP</name>
        <dbReference type="ChEBI" id="CHEBI:30616"/>
    </ligand>
</feature>
<organism>
    <name type="scientific">Kineococcus radiotolerans (strain ATCC BAA-149 / DSM 14245 / SRS30216)</name>
    <dbReference type="NCBI Taxonomy" id="266940"/>
    <lineage>
        <taxon>Bacteria</taxon>
        <taxon>Bacillati</taxon>
        <taxon>Actinomycetota</taxon>
        <taxon>Actinomycetes</taxon>
        <taxon>Kineosporiales</taxon>
        <taxon>Kineosporiaceae</taxon>
        <taxon>Kineococcus</taxon>
    </lineage>
</organism>
<proteinExistence type="inferred from homology"/>
<sequence length="542" mass="56811">MAKQLLFDDTARKALERGVDALANAVKVTLGPKGRNVVIDKKWGAPTITNDGVTIAREVELDDPYENLGAQLAKEVATKTNDVAGDGTTTATVLAQALVHEGLRNVAAGAAPSGLKRGIDAAVDAVSDQLLSMARDVDGKGDIAHVATISAQDPAVGELLADAFDKVGKDGVITVEESSTTALELDFTEGMQFDKGYISPYFVTDAERQEAVLEDAYVLVHQGKISTVQDLLPLLEKVLKAAKPLLIIAEDVDGEALSTLVVNKIRGTFNAVAVKAPGFGDRRKAILQDIATLTGAQVVAEEVGLKLDQIDLDALGTARRITVTKDDTTIVDGAGSSEDIAGRVAQIKAEVERTDSDWDREKLQERLAKLSGGVVVIKVGAHTEVELKEKKHRIEDAVSATRAAIEEGIVAGGGSALVHAVSVLEDNLGRTGDEATGVALVRKAASEPLRWIAENAGLEGYVVVEKVRSLEVGSGLNAATGEYVDLLAAGVLDPVKVTRSALRNAASIASMVLTTDTLVVDKKEEDLAVNGGGHGHGHGHGH</sequence>
<dbReference type="EC" id="5.6.1.7" evidence="1"/>
<dbReference type="EMBL" id="CP000750">
    <property type="protein sequence ID" value="ABS02225.1"/>
    <property type="molecule type" value="Genomic_DNA"/>
</dbReference>
<dbReference type="RefSeq" id="WP_012084927.1">
    <property type="nucleotide sequence ID" value="NC_009664.2"/>
</dbReference>
<dbReference type="SMR" id="A6W5Y6"/>
<dbReference type="STRING" id="266940.Krad_0736"/>
<dbReference type="KEGG" id="kra:Krad_0736"/>
<dbReference type="eggNOG" id="COG0459">
    <property type="taxonomic scope" value="Bacteria"/>
</dbReference>
<dbReference type="HOGENOM" id="CLU_016503_3_0_11"/>
<dbReference type="OrthoDB" id="9766614at2"/>
<dbReference type="Proteomes" id="UP000001116">
    <property type="component" value="Chromosome"/>
</dbReference>
<dbReference type="GO" id="GO:0005737">
    <property type="term" value="C:cytoplasm"/>
    <property type="evidence" value="ECO:0007669"/>
    <property type="project" value="UniProtKB-SubCell"/>
</dbReference>
<dbReference type="GO" id="GO:0005524">
    <property type="term" value="F:ATP binding"/>
    <property type="evidence" value="ECO:0007669"/>
    <property type="project" value="UniProtKB-UniRule"/>
</dbReference>
<dbReference type="GO" id="GO:0140662">
    <property type="term" value="F:ATP-dependent protein folding chaperone"/>
    <property type="evidence" value="ECO:0007669"/>
    <property type="project" value="InterPro"/>
</dbReference>
<dbReference type="GO" id="GO:0016853">
    <property type="term" value="F:isomerase activity"/>
    <property type="evidence" value="ECO:0007669"/>
    <property type="project" value="UniProtKB-KW"/>
</dbReference>
<dbReference type="GO" id="GO:0051082">
    <property type="term" value="F:unfolded protein binding"/>
    <property type="evidence" value="ECO:0007669"/>
    <property type="project" value="UniProtKB-UniRule"/>
</dbReference>
<dbReference type="GO" id="GO:0042026">
    <property type="term" value="P:protein refolding"/>
    <property type="evidence" value="ECO:0007669"/>
    <property type="project" value="UniProtKB-UniRule"/>
</dbReference>
<dbReference type="CDD" id="cd03344">
    <property type="entry name" value="GroEL"/>
    <property type="match status" value="1"/>
</dbReference>
<dbReference type="FunFam" id="3.50.7.10:FF:000001">
    <property type="entry name" value="60 kDa chaperonin"/>
    <property type="match status" value="1"/>
</dbReference>
<dbReference type="Gene3D" id="3.50.7.10">
    <property type="entry name" value="GroEL"/>
    <property type="match status" value="1"/>
</dbReference>
<dbReference type="Gene3D" id="1.10.560.10">
    <property type="entry name" value="GroEL-like equatorial domain"/>
    <property type="match status" value="1"/>
</dbReference>
<dbReference type="Gene3D" id="3.30.260.10">
    <property type="entry name" value="TCP-1-like chaperonin intermediate domain"/>
    <property type="match status" value="1"/>
</dbReference>
<dbReference type="HAMAP" id="MF_00600">
    <property type="entry name" value="CH60"/>
    <property type="match status" value="1"/>
</dbReference>
<dbReference type="InterPro" id="IPR018370">
    <property type="entry name" value="Chaperonin_Cpn60_CS"/>
</dbReference>
<dbReference type="InterPro" id="IPR001844">
    <property type="entry name" value="Cpn60/GroEL"/>
</dbReference>
<dbReference type="InterPro" id="IPR002423">
    <property type="entry name" value="Cpn60/GroEL/TCP-1"/>
</dbReference>
<dbReference type="InterPro" id="IPR027409">
    <property type="entry name" value="GroEL-like_apical_dom_sf"/>
</dbReference>
<dbReference type="InterPro" id="IPR027413">
    <property type="entry name" value="GROEL-like_equatorial_sf"/>
</dbReference>
<dbReference type="InterPro" id="IPR027410">
    <property type="entry name" value="TCP-1-like_intermed_sf"/>
</dbReference>
<dbReference type="NCBIfam" id="TIGR02348">
    <property type="entry name" value="GroEL"/>
    <property type="match status" value="1"/>
</dbReference>
<dbReference type="NCBIfam" id="NF000592">
    <property type="entry name" value="PRK00013.1"/>
    <property type="match status" value="1"/>
</dbReference>
<dbReference type="NCBIfam" id="NF009487">
    <property type="entry name" value="PRK12849.1"/>
    <property type="match status" value="1"/>
</dbReference>
<dbReference type="NCBIfam" id="NF009488">
    <property type="entry name" value="PRK12850.1"/>
    <property type="match status" value="1"/>
</dbReference>
<dbReference type="NCBIfam" id="NF009489">
    <property type="entry name" value="PRK12851.1"/>
    <property type="match status" value="1"/>
</dbReference>
<dbReference type="PANTHER" id="PTHR45633">
    <property type="entry name" value="60 KDA HEAT SHOCK PROTEIN, MITOCHONDRIAL"/>
    <property type="match status" value="1"/>
</dbReference>
<dbReference type="Pfam" id="PF00118">
    <property type="entry name" value="Cpn60_TCP1"/>
    <property type="match status" value="1"/>
</dbReference>
<dbReference type="PRINTS" id="PR00298">
    <property type="entry name" value="CHAPERONIN60"/>
</dbReference>
<dbReference type="SUPFAM" id="SSF52029">
    <property type="entry name" value="GroEL apical domain-like"/>
    <property type="match status" value="1"/>
</dbReference>
<dbReference type="SUPFAM" id="SSF48592">
    <property type="entry name" value="GroEL equatorial domain-like"/>
    <property type="match status" value="1"/>
</dbReference>
<dbReference type="SUPFAM" id="SSF54849">
    <property type="entry name" value="GroEL-intermediate domain like"/>
    <property type="match status" value="1"/>
</dbReference>
<dbReference type="PROSITE" id="PS00296">
    <property type="entry name" value="CHAPERONINS_CPN60"/>
    <property type="match status" value="1"/>
</dbReference>
<accession>A6W5Y6</accession>